<keyword id="KW-0903">Direct protein sequencing</keyword>
<keyword id="KW-1015">Disulfide bond</keyword>
<keyword id="KW-0325">Glycoprotein</keyword>
<keyword id="KW-0593">Phospholipase A2 inhibitor</keyword>
<keyword id="KW-0964">Secreted</keyword>
<keyword id="KW-0732">Signal</keyword>
<feature type="signal peptide" evidence="3">
    <location>
        <begin position="1"/>
        <end position="19"/>
    </location>
</feature>
<feature type="chain" id="PRO_5004331294" description="Phospholipase A2 inhibitor NAI" evidence="6">
    <location>
        <begin position="20"/>
        <end position="201"/>
    </location>
</feature>
<feature type="glycosylation site" description="N-linked (GlcNAc...) asparagine" evidence="2">
    <location>
        <position position="176"/>
    </location>
</feature>
<feature type="disulfide bond" evidence="1">
    <location>
        <begin position="22"/>
        <end position="47"/>
    </location>
</feature>
<feature type="disulfide bond" evidence="1">
    <location>
        <begin position="25"/>
        <end position="32"/>
    </location>
</feature>
<feature type="disulfide bond" evidence="1">
    <location>
        <begin position="40"/>
        <end position="68"/>
    </location>
</feature>
<feature type="disulfide bond" evidence="1">
    <location>
        <begin position="74"/>
        <end position="95"/>
    </location>
</feature>
<feature type="disulfide bond" evidence="1">
    <location>
        <begin position="96"/>
        <end position="101"/>
    </location>
</feature>
<feature type="disulfide bond" evidence="1">
    <location>
        <begin position="119"/>
        <end position="144"/>
    </location>
</feature>
<feature type="disulfide bond" evidence="1">
    <location>
        <begin position="137"/>
        <end position="166"/>
    </location>
</feature>
<feature type="disulfide bond" evidence="1">
    <location>
        <begin position="170"/>
        <end position="191"/>
    </location>
</feature>
<feature type="sequence conflict" description="In Ref. 2; AA sequence." evidence="5" ref="2">
    <original>K</original>
    <variation>R</variation>
    <location>
        <position position="30"/>
    </location>
</feature>
<feature type="sequence conflict" description="In Ref. 2; AA sequence." evidence="5" ref="2">
    <original>T</original>
    <variation>A</variation>
    <location>
        <position position="37"/>
    </location>
</feature>
<feature type="sequence conflict" description="In Ref. 2; AA sequence." evidence="5" ref="2">
    <original>A</original>
    <variation>P</variation>
    <location>
        <position position="43"/>
    </location>
</feature>
<evidence type="ECO:0000250" key="1">
    <source>
        <dbReference type="UniProtKB" id="Q7LZI1"/>
    </source>
</evidence>
<evidence type="ECO:0000255" key="2">
    <source>
        <dbReference type="PROSITE-ProRule" id="PRU00498"/>
    </source>
</evidence>
<evidence type="ECO:0000269" key="3">
    <source>
    </source>
</evidence>
<evidence type="ECO:0000303" key="4">
    <source>
    </source>
</evidence>
<evidence type="ECO:0000305" key="5"/>
<evidence type="ECO:0000305" key="6">
    <source>
    </source>
</evidence>
<evidence type="ECO:0000305" key="7">
    <source ref="1"/>
</evidence>
<name>PLIGA_NOTAT</name>
<accession>Q9PTC3</accession>
<sequence length="201" mass="22315">MKSLQIICLLFVLVARGSCHSCEICHNFGKDCQSDETEECASAEDQCGTVLMEVSSAPISFRSIHRKCFSSSLCKLERFDINIGHDSYLRGRIHCCDEARCEAQQFPGLPLSFPNGYHCPGILGVFSVDSSEHEAICRGTETKCINLAGFRKERYPIDIAYNIKGCTSSCPELRLNRTHEEHGNGLIKVECTEASKITPSE</sequence>
<dbReference type="EMBL" id="AF211162">
    <property type="protein sequence ID" value="AAF23779.1"/>
    <property type="molecule type" value="mRNA"/>
</dbReference>
<dbReference type="GO" id="GO:0005576">
    <property type="term" value="C:extracellular region"/>
    <property type="evidence" value="ECO:0007669"/>
    <property type="project" value="UniProtKB-SubCell"/>
</dbReference>
<dbReference type="GO" id="GO:0019834">
    <property type="term" value="F:phospholipase A2 inhibitor activity"/>
    <property type="evidence" value="ECO:0007669"/>
    <property type="project" value="UniProtKB-KW"/>
</dbReference>
<dbReference type="Gene3D" id="2.10.60.10">
    <property type="entry name" value="CD59"/>
    <property type="match status" value="1"/>
</dbReference>
<dbReference type="InterPro" id="IPR050918">
    <property type="entry name" value="CNF-like_PLA2_Inhibitor"/>
</dbReference>
<dbReference type="InterPro" id="IPR016054">
    <property type="entry name" value="LY6_UPA_recep-like"/>
</dbReference>
<dbReference type="InterPro" id="IPR016338">
    <property type="entry name" value="PLipase_A2-inh_b-type"/>
</dbReference>
<dbReference type="InterPro" id="IPR004126">
    <property type="entry name" value="PLipase_A2_inh_N"/>
</dbReference>
<dbReference type="InterPro" id="IPR045860">
    <property type="entry name" value="Snake_toxin-like_sf"/>
</dbReference>
<dbReference type="PANTHER" id="PTHR20914:SF9">
    <property type="entry name" value="COILED, ISOFORM A"/>
    <property type="match status" value="1"/>
</dbReference>
<dbReference type="PANTHER" id="PTHR20914">
    <property type="entry name" value="LY6/PLAUR DOMAIN-CONTAINING PROTEIN 8"/>
    <property type="match status" value="1"/>
</dbReference>
<dbReference type="Pfam" id="PF02988">
    <property type="entry name" value="PLA2_inh"/>
    <property type="match status" value="1"/>
</dbReference>
<dbReference type="Pfam" id="PF00021">
    <property type="entry name" value="UPAR_LY6"/>
    <property type="match status" value="1"/>
</dbReference>
<dbReference type="PIRSF" id="PIRSF002023">
    <property type="entry name" value="PLA2_inhib_alpha/gamma"/>
    <property type="match status" value="1"/>
</dbReference>
<dbReference type="SMART" id="SM00134">
    <property type="entry name" value="LU"/>
    <property type="match status" value="1"/>
</dbReference>
<dbReference type="SUPFAM" id="SSF57302">
    <property type="entry name" value="Snake toxin-like"/>
    <property type="match status" value="2"/>
</dbReference>
<comment type="function">
    <text evidence="3">Inhibits the enzymatic activity of all phospholipase A2 tested, binding them with micromole to nanomole affinity.</text>
</comment>
<comment type="biophysicochemical properties">
    <phDependence>
        <text evidence="3">Optimum pH is 4-12. Important decrease in activity at pH 2.</text>
    </phDependence>
    <temperatureDependence>
        <text evidence="3">Optimum temperature is 4-90 degrees Celsius. Weak decrease in activity at 100 degrees Celsius.</text>
    </temperatureDependence>
</comment>
<comment type="subunit">
    <text evidence="6">Heterotrimer of 2 subunits A and 1 subunit B; non-covalently linked.</text>
</comment>
<comment type="subcellular location">
    <subcellularLocation>
        <location evidence="3">Secreted</location>
    </subcellularLocation>
    <text evidence="6">Secreted in blood plasma.</text>
</comment>
<comment type="tissue specificity">
    <text evidence="7">Expressed by the liver.</text>
</comment>
<comment type="PTM">
    <text evidence="3">N-glycosylated, probably by biantennary structure. Glycosylation does not change PLA2 inhibitory activity.</text>
</comment>
<comment type="similarity">
    <text evidence="5">Belongs to the CNF-like-inhibitor family.</text>
</comment>
<reference key="1">
    <citation type="submission" date="1999-12" db="EMBL/GenBank/DDBJ databases">
        <title>Identification of alpha and beta subunit isoforms of a Phospholipase A2 inhibitor isolated from four species of Elapidae.</title>
        <authorList>
            <person name="Sekuloski S."/>
            <person name="Dunn R.D."/>
            <person name="Broady K.W."/>
        </authorList>
    </citation>
    <scope>NUCLEOTIDE SEQUENCE [MRNA]</scope>
    <source>
        <tissue>Liver</tissue>
    </source>
</reference>
<reference key="2">
    <citation type="journal article" date="2000" name="J. Biol. Chem.">
        <title>Functional characteristics of a phospholipase A(2) inhibitor from Notechis ater serum.</title>
        <authorList>
            <person name="Hains P.G."/>
            <person name="Sung K.L."/>
            <person name="Tseng A."/>
            <person name="Broady K.W."/>
        </authorList>
    </citation>
    <scope>PROTEIN SEQUENCE OF 20-48</scope>
    <scope>FUNCTION</scope>
    <scope>SUBCELLULAR LOCATION</scope>
    <scope>SUBUNIT</scope>
    <scope>GLYCOSYLATION</scope>
    <source>
        <tissue>Serum</tissue>
    </source>
</reference>
<proteinExistence type="evidence at protein level"/>
<organism>
    <name type="scientific">Notechis ater</name>
    <name type="common">Black tiger snake</name>
    <dbReference type="NCBI Taxonomy" id="111176"/>
    <lineage>
        <taxon>Eukaryota</taxon>
        <taxon>Metazoa</taxon>
        <taxon>Chordata</taxon>
        <taxon>Craniata</taxon>
        <taxon>Vertebrata</taxon>
        <taxon>Euteleostomi</taxon>
        <taxon>Lepidosauria</taxon>
        <taxon>Squamata</taxon>
        <taxon>Bifurcata</taxon>
        <taxon>Unidentata</taxon>
        <taxon>Episquamata</taxon>
        <taxon>Toxicofera</taxon>
        <taxon>Serpentes</taxon>
        <taxon>Colubroidea</taxon>
        <taxon>Elapidae</taxon>
        <taxon>Hydrophiinae</taxon>
        <taxon>Notechis</taxon>
    </lineage>
</organism>
<protein>
    <recommendedName>
        <fullName evidence="5">Phospholipase A2 inhibitor NAI</fullName>
    </recommendedName>
    <alternativeName>
        <fullName evidence="4">Notechis ater inhibitor</fullName>
        <shortName evidence="4">NAI</shortName>
    </alternativeName>
    <alternativeName>
        <fullName>gamma-PLI</fullName>
    </alternativeName>
</protein>